<name>FADB_SHEAM</name>
<comment type="function">
    <text evidence="1">Involved in the aerobic and anaerobic degradation of long-chain fatty acids via beta-oxidation cycle. Catalyzes the formation of 3-oxoacyl-CoA from enoyl-CoA via L-3-hydroxyacyl-CoA. It can also use D-3-hydroxyacyl-CoA and cis-3-enoyl-CoA as substrate.</text>
</comment>
<comment type="catalytic activity">
    <reaction evidence="1">
        <text>a (3S)-3-hydroxyacyl-CoA + NAD(+) = a 3-oxoacyl-CoA + NADH + H(+)</text>
        <dbReference type="Rhea" id="RHEA:22432"/>
        <dbReference type="ChEBI" id="CHEBI:15378"/>
        <dbReference type="ChEBI" id="CHEBI:57318"/>
        <dbReference type="ChEBI" id="CHEBI:57540"/>
        <dbReference type="ChEBI" id="CHEBI:57945"/>
        <dbReference type="ChEBI" id="CHEBI:90726"/>
        <dbReference type="EC" id="1.1.1.35"/>
    </reaction>
</comment>
<comment type="catalytic activity">
    <reaction evidence="1">
        <text>a (3S)-3-hydroxyacyl-CoA = a (2E)-enoyl-CoA + H2O</text>
        <dbReference type="Rhea" id="RHEA:16105"/>
        <dbReference type="ChEBI" id="CHEBI:15377"/>
        <dbReference type="ChEBI" id="CHEBI:57318"/>
        <dbReference type="ChEBI" id="CHEBI:58856"/>
        <dbReference type="EC" id="4.2.1.17"/>
    </reaction>
</comment>
<comment type="catalytic activity">
    <reaction evidence="1">
        <text>a 4-saturated-(3S)-3-hydroxyacyl-CoA = a (3E)-enoyl-CoA + H2O</text>
        <dbReference type="Rhea" id="RHEA:20724"/>
        <dbReference type="ChEBI" id="CHEBI:15377"/>
        <dbReference type="ChEBI" id="CHEBI:58521"/>
        <dbReference type="ChEBI" id="CHEBI:137480"/>
        <dbReference type="EC" id="4.2.1.17"/>
    </reaction>
</comment>
<comment type="catalytic activity">
    <reaction evidence="1">
        <text>(3S)-3-hydroxybutanoyl-CoA = (3R)-3-hydroxybutanoyl-CoA</text>
        <dbReference type="Rhea" id="RHEA:21760"/>
        <dbReference type="ChEBI" id="CHEBI:57315"/>
        <dbReference type="ChEBI" id="CHEBI:57316"/>
        <dbReference type="EC" id="5.1.2.3"/>
    </reaction>
</comment>
<comment type="catalytic activity">
    <reaction evidence="1">
        <text>a (3Z)-enoyl-CoA = a 4-saturated (2E)-enoyl-CoA</text>
        <dbReference type="Rhea" id="RHEA:45900"/>
        <dbReference type="ChEBI" id="CHEBI:85097"/>
        <dbReference type="ChEBI" id="CHEBI:85489"/>
        <dbReference type="EC" id="5.3.3.8"/>
    </reaction>
</comment>
<comment type="catalytic activity">
    <reaction evidence="1">
        <text>a (3E)-enoyl-CoA = a 4-saturated (2E)-enoyl-CoA</text>
        <dbReference type="Rhea" id="RHEA:45228"/>
        <dbReference type="ChEBI" id="CHEBI:58521"/>
        <dbReference type="ChEBI" id="CHEBI:85097"/>
        <dbReference type="EC" id="5.3.3.8"/>
    </reaction>
</comment>
<comment type="pathway">
    <text evidence="1">Lipid metabolism; fatty acid beta-oxidation.</text>
</comment>
<comment type="subunit">
    <text evidence="1">Heterotetramer of two alpha chains (FadB) and two beta chains (FadA).</text>
</comment>
<comment type="similarity">
    <text evidence="1">In the N-terminal section; belongs to the enoyl-CoA hydratase/isomerase family.</text>
</comment>
<comment type="similarity">
    <text evidence="1">In the C-terminal section; belongs to the 3-hydroxyacyl-CoA dehydrogenase family.</text>
</comment>
<dbReference type="EC" id="4.2.1.17" evidence="1"/>
<dbReference type="EC" id="5.1.2.3" evidence="1"/>
<dbReference type="EC" id="5.3.3.8" evidence="1"/>
<dbReference type="EC" id="1.1.1.35" evidence="1"/>
<dbReference type="EMBL" id="CP000507">
    <property type="protein sequence ID" value="ABL98244.1"/>
    <property type="molecule type" value="Genomic_DNA"/>
</dbReference>
<dbReference type="RefSeq" id="WP_011758155.1">
    <property type="nucleotide sequence ID" value="NC_008700.1"/>
</dbReference>
<dbReference type="SMR" id="A1S1I8"/>
<dbReference type="STRING" id="326297.Sama_0032"/>
<dbReference type="KEGG" id="saz:Sama_0032"/>
<dbReference type="eggNOG" id="COG1024">
    <property type="taxonomic scope" value="Bacteria"/>
</dbReference>
<dbReference type="eggNOG" id="COG1250">
    <property type="taxonomic scope" value="Bacteria"/>
</dbReference>
<dbReference type="HOGENOM" id="CLU_009834_16_3_6"/>
<dbReference type="OrthoDB" id="5389341at2"/>
<dbReference type="UniPathway" id="UPA00659"/>
<dbReference type="Proteomes" id="UP000009175">
    <property type="component" value="Chromosome"/>
</dbReference>
<dbReference type="GO" id="GO:0036125">
    <property type="term" value="C:fatty acid beta-oxidation multienzyme complex"/>
    <property type="evidence" value="ECO:0007669"/>
    <property type="project" value="InterPro"/>
</dbReference>
<dbReference type="GO" id="GO:0008692">
    <property type="term" value="F:3-hydroxybutyryl-CoA epimerase activity"/>
    <property type="evidence" value="ECO:0007669"/>
    <property type="project" value="UniProtKB-UniRule"/>
</dbReference>
<dbReference type="GO" id="GO:0004165">
    <property type="term" value="F:delta(3)-delta(2)-enoyl-CoA isomerase activity"/>
    <property type="evidence" value="ECO:0007669"/>
    <property type="project" value="UniProtKB-UniRule"/>
</dbReference>
<dbReference type="GO" id="GO:0004300">
    <property type="term" value="F:enoyl-CoA hydratase activity"/>
    <property type="evidence" value="ECO:0007669"/>
    <property type="project" value="UniProtKB-UniRule"/>
</dbReference>
<dbReference type="GO" id="GO:0016509">
    <property type="term" value="F:long-chain-3-hydroxyacyl-CoA dehydrogenase activity"/>
    <property type="evidence" value="ECO:0007669"/>
    <property type="project" value="TreeGrafter"/>
</dbReference>
<dbReference type="GO" id="GO:0070403">
    <property type="term" value="F:NAD+ binding"/>
    <property type="evidence" value="ECO:0007669"/>
    <property type="project" value="InterPro"/>
</dbReference>
<dbReference type="GO" id="GO:0006635">
    <property type="term" value="P:fatty acid beta-oxidation"/>
    <property type="evidence" value="ECO:0007669"/>
    <property type="project" value="UniProtKB-UniRule"/>
</dbReference>
<dbReference type="CDD" id="cd06558">
    <property type="entry name" value="crotonase-like"/>
    <property type="match status" value="1"/>
</dbReference>
<dbReference type="FunFam" id="1.10.1040.50:FF:000001">
    <property type="entry name" value="Fatty acid oxidation complex subunit alpha"/>
    <property type="match status" value="1"/>
</dbReference>
<dbReference type="FunFam" id="3.40.50.720:FF:000009">
    <property type="entry name" value="Fatty oxidation complex, alpha subunit"/>
    <property type="match status" value="1"/>
</dbReference>
<dbReference type="Gene3D" id="1.10.1040.50">
    <property type="match status" value="1"/>
</dbReference>
<dbReference type="Gene3D" id="3.90.226.10">
    <property type="entry name" value="2-enoyl-CoA Hydratase, Chain A, domain 1"/>
    <property type="match status" value="1"/>
</dbReference>
<dbReference type="Gene3D" id="3.40.50.720">
    <property type="entry name" value="NAD(P)-binding Rossmann-like Domain"/>
    <property type="match status" value="1"/>
</dbReference>
<dbReference type="HAMAP" id="MF_01621">
    <property type="entry name" value="FadB"/>
    <property type="match status" value="1"/>
</dbReference>
<dbReference type="InterPro" id="IPR006180">
    <property type="entry name" value="3-OHacyl-CoA_DH_CS"/>
</dbReference>
<dbReference type="InterPro" id="IPR006176">
    <property type="entry name" value="3-OHacyl-CoA_DH_NAD-bd"/>
</dbReference>
<dbReference type="InterPro" id="IPR006108">
    <property type="entry name" value="3HC_DH_C"/>
</dbReference>
<dbReference type="InterPro" id="IPR008927">
    <property type="entry name" value="6-PGluconate_DH-like_C_sf"/>
</dbReference>
<dbReference type="InterPro" id="IPR029045">
    <property type="entry name" value="ClpP/crotonase-like_dom_sf"/>
</dbReference>
<dbReference type="InterPro" id="IPR001753">
    <property type="entry name" value="Enoyl-CoA_hydra/iso"/>
</dbReference>
<dbReference type="InterPro" id="IPR050136">
    <property type="entry name" value="FA_oxidation_alpha_subunit"/>
</dbReference>
<dbReference type="InterPro" id="IPR012799">
    <property type="entry name" value="FadB"/>
</dbReference>
<dbReference type="InterPro" id="IPR036291">
    <property type="entry name" value="NAD(P)-bd_dom_sf"/>
</dbReference>
<dbReference type="NCBIfam" id="TIGR02437">
    <property type="entry name" value="FadB"/>
    <property type="match status" value="1"/>
</dbReference>
<dbReference type="NCBIfam" id="NF008727">
    <property type="entry name" value="PRK11730.1"/>
    <property type="match status" value="1"/>
</dbReference>
<dbReference type="PANTHER" id="PTHR43612">
    <property type="entry name" value="TRIFUNCTIONAL ENZYME SUBUNIT ALPHA"/>
    <property type="match status" value="1"/>
</dbReference>
<dbReference type="PANTHER" id="PTHR43612:SF3">
    <property type="entry name" value="TRIFUNCTIONAL ENZYME SUBUNIT ALPHA, MITOCHONDRIAL"/>
    <property type="match status" value="1"/>
</dbReference>
<dbReference type="Pfam" id="PF00725">
    <property type="entry name" value="3HCDH"/>
    <property type="match status" value="1"/>
</dbReference>
<dbReference type="Pfam" id="PF02737">
    <property type="entry name" value="3HCDH_N"/>
    <property type="match status" value="1"/>
</dbReference>
<dbReference type="Pfam" id="PF00378">
    <property type="entry name" value="ECH_1"/>
    <property type="match status" value="1"/>
</dbReference>
<dbReference type="SUPFAM" id="SSF48179">
    <property type="entry name" value="6-phosphogluconate dehydrogenase C-terminal domain-like"/>
    <property type="match status" value="2"/>
</dbReference>
<dbReference type="SUPFAM" id="SSF52096">
    <property type="entry name" value="ClpP/crotonase"/>
    <property type="match status" value="1"/>
</dbReference>
<dbReference type="SUPFAM" id="SSF51735">
    <property type="entry name" value="NAD(P)-binding Rossmann-fold domains"/>
    <property type="match status" value="1"/>
</dbReference>
<dbReference type="PROSITE" id="PS00067">
    <property type="entry name" value="3HCDH"/>
    <property type="match status" value="1"/>
</dbReference>
<organism>
    <name type="scientific">Shewanella amazonensis (strain ATCC BAA-1098 / SB2B)</name>
    <dbReference type="NCBI Taxonomy" id="326297"/>
    <lineage>
        <taxon>Bacteria</taxon>
        <taxon>Pseudomonadati</taxon>
        <taxon>Pseudomonadota</taxon>
        <taxon>Gammaproteobacteria</taxon>
        <taxon>Alteromonadales</taxon>
        <taxon>Shewanellaceae</taxon>
        <taxon>Shewanella</taxon>
    </lineage>
</organism>
<proteinExistence type="inferred from homology"/>
<evidence type="ECO:0000255" key="1">
    <source>
        <dbReference type="HAMAP-Rule" id="MF_01621"/>
    </source>
</evidence>
<keyword id="KW-0276">Fatty acid metabolism</keyword>
<keyword id="KW-0413">Isomerase</keyword>
<keyword id="KW-0442">Lipid degradation</keyword>
<keyword id="KW-0443">Lipid metabolism</keyword>
<keyword id="KW-0456">Lyase</keyword>
<keyword id="KW-0511">Multifunctional enzyme</keyword>
<keyword id="KW-0520">NAD</keyword>
<keyword id="KW-0560">Oxidoreductase</keyword>
<keyword id="KW-1185">Reference proteome</keyword>
<sequence length="716" mass="76369">MIYQSPTIQVELTADKIARLCFNAPGSVNKFDRETLASLNAALDVLKDSDAKAAVLTSGKDTFIVGADITEFLALFAEEDAKLMEWIAQANVVFNKLEDLPFPTVSAIKGFALGGGCEAILATDFRVADTSAKIGLPETKLGLIPGFGGTVRLPRLIGADNALEWITTGKDQRPEDALKVGAIDAVVAPENLEAAAIQMLNDALAGKLDWQARRARKQAPLTLPKLEAMMSFTTAKGMVYAVAGKHYPAPMAAVSVVEQAAGMSRAEALVVEHNAFIKLAKTDVATALIGIFLNDQLVKGKAKKASKLAKDIKHAAVLGAGIMGGGIAYQSASKGTPIVMKDINQAALDLGVNEAAKLLSAQVARGRSTPDKMAKVLNNITPALDYAPLKDVNVVVEAVVENPKVKAMVLADVENVVADDAIIASNTSTISIDLLAKSLKNPARFCGMHFFNPVHKMPLVEVIRGKDTSEETVASVVAYASKMGKTPIVVNDCPGFFVNRVLFPYFAGFNGLLADGGDFAAIDKVMEKQFGWPMGPAYLLDVVGLDTGHHAQAVMADGFPDRMGKSDKDAIDVMYEAGRLGQKNGKGFYQYSIDKRGKPKKDVDPASYTMLAEAFGAQKAFEADEIIARTMIPMIIETVRCLEEGIVASPAEADMGLVYGLGFPPFRGGVFRYLDTMGVANFVALADKYAHLGGLYQVTDAMRELASNNGSYYPKA</sequence>
<accession>A1S1I8</accession>
<gene>
    <name evidence="1" type="primary">fadB</name>
    <name type="ordered locus">Sama_0032</name>
</gene>
<reference key="1">
    <citation type="submission" date="2006-12" db="EMBL/GenBank/DDBJ databases">
        <title>Complete sequence of Shewanella amazonensis SB2B.</title>
        <authorList>
            <consortium name="US DOE Joint Genome Institute"/>
            <person name="Copeland A."/>
            <person name="Lucas S."/>
            <person name="Lapidus A."/>
            <person name="Barry K."/>
            <person name="Detter J.C."/>
            <person name="Glavina del Rio T."/>
            <person name="Hammon N."/>
            <person name="Israni S."/>
            <person name="Dalin E."/>
            <person name="Tice H."/>
            <person name="Pitluck S."/>
            <person name="Munk A.C."/>
            <person name="Brettin T."/>
            <person name="Bruce D."/>
            <person name="Han C."/>
            <person name="Tapia R."/>
            <person name="Gilna P."/>
            <person name="Schmutz J."/>
            <person name="Larimer F."/>
            <person name="Land M."/>
            <person name="Hauser L."/>
            <person name="Kyrpides N."/>
            <person name="Mikhailova N."/>
            <person name="Fredrickson J."/>
            <person name="Richardson P."/>
        </authorList>
    </citation>
    <scope>NUCLEOTIDE SEQUENCE [LARGE SCALE GENOMIC DNA]</scope>
    <source>
        <strain>ATCC BAA-1098 / SB2B</strain>
    </source>
</reference>
<feature type="chain" id="PRO_1000069572" description="Fatty acid oxidation complex subunit alpha">
    <location>
        <begin position="1"/>
        <end position="716"/>
    </location>
</feature>
<feature type="region of interest" description="Enoyl-CoA hydratase/isomerase" evidence="1">
    <location>
        <begin position="1"/>
        <end position="188"/>
    </location>
</feature>
<feature type="region of interest" description="3-hydroxyacyl-CoA dehydrogenase" evidence="1">
    <location>
        <begin position="310"/>
        <end position="716"/>
    </location>
</feature>
<feature type="active site" description="For 3-hydroxyacyl-CoA dehydrogenase activity" evidence="1">
    <location>
        <position position="449"/>
    </location>
</feature>
<feature type="binding site" evidence="1">
    <location>
        <position position="295"/>
    </location>
    <ligand>
        <name>substrate</name>
    </ligand>
</feature>
<feature type="binding site" evidence="1">
    <location>
        <position position="323"/>
    </location>
    <ligand>
        <name>NAD(+)</name>
        <dbReference type="ChEBI" id="CHEBI:57540"/>
    </ligand>
</feature>
<feature type="binding site" evidence="1">
    <location>
        <position position="342"/>
    </location>
    <ligand>
        <name>NAD(+)</name>
        <dbReference type="ChEBI" id="CHEBI:57540"/>
    </ligand>
</feature>
<feature type="binding site" evidence="1">
    <location>
        <begin position="399"/>
        <end position="401"/>
    </location>
    <ligand>
        <name>NAD(+)</name>
        <dbReference type="ChEBI" id="CHEBI:57540"/>
    </ligand>
</feature>
<feature type="binding site" evidence="1">
    <location>
        <position position="406"/>
    </location>
    <ligand>
        <name>NAD(+)</name>
        <dbReference type="ChEBI" id="CHEBI:57540"/>
    </ligand>
</feature>
<feature type="binding site" evidence="1">
    <location>
        <position position="428"/>
    </location>
    <ligand>
        <name>NAD(+)</name>
        <dbReference type="ChEBI" id="CHEBI:57540"/>
    </ligand>
</feature>
<feature type="binding site" evidence="1">
    <location>
        <position position="452"/>
    </location>
    <ligand>
        <name>NAD(+)</name>
        <dbReference type="ChEBI" id="CHEBI:57540"/>
    </ligand>
</feature>
<feature type="binding site" evidence="1">
    <location>
        <position position="499"/>
    </location>
    <ligand>
        <name>substrate</name>
    </ligand>
</feature>
<feature type="binding site" evidence="1">
    <location>
        <position position="659"/>
    </location>
    <ligand>
        <name>substrate</name>
    </ligand>
</feature>
<feature type="site" description="Important for catalytic activity" evidence="1">
    <location>
        <position position="118"/>
    </location>
</feature>
<feature type="site" description="Important for catalytic activity" evidence="1">
    <location>
        <position position="138"/>
    </location>
</feature>
<protein>
    <recommendedName>
        <fullName evidence="1">Fatty acid oxidation complex subunit alpha</fullName>
    </recommendedName>
    <domain>
        <recommendedName>
            <fullName evidence="1">Enoyl-CoA hydratase/Delta(3)-cis-Delta(2)-trans-enoyl-CoA isomerase/3-hydroxybutyryl-CoA epimerase</fullName>
            <ecNumber evidence="1">4.2.1.17</ecNumber>
            <ecNumber evidence="1">5.1.2.3</ecNumber>
            <ecNumber evidence="1">5.3.3.8</ecNumber>
        </recommendedName>
    </domain>
    <domain>
        <recommendedName>
            <fullName evidence="1">3-hydroxyacyl-CoA dehydrogenase</fullName>
            <ecNumber evidence="1">1.1.1.35</ecNumber>
        </recommendedName>
    </domain>
</protein>